<protein>
    <recommendedName>
        <fullName evidence="1">1-deoxy-D-xylulose 5-phosphate reductoisomerase</fullName>
        <shortName evidence="1">DXP reductoisomerase</shortName>
        <ecNumber evidence="1">1.1.1.267</ecNumber>
    </recommendedName>
    <alternativeName>
        <fullName evidence="1">1-deoxyxylulose-5-phosphate reductoisomerase</fullName>
    </alternativeName>
    <alternativeName>
        <fullName evidence="1">2-C-methyl-D-erythritol 4-phosphate synthase</fullName>
    </alternativeName>
</protein>
<evidence type="ECO:0000255" key="1">
    <source>
        <dbReference type="HAMAP-Rule" id="MF_00183"/>
    </source>
</evidence>
<organism>
    <name type="scientific">Photobacterium profundum (strain SS9)</name>
    <dbReference type="NCBI Taxonomy" id="298386"/>
    <lineage>
        <taxon>Bacteria</taxon>
        <taxon>Pseudomonadati</taxon>
        <taxon>Pseudomonadota</taxon>
        <taxon>Gammaproteobacteria</taxon>
        <taxon>Vibrionales</taxon>
        <taxon>Vibrionaceae</taxon>
        <taxon>Photobacterium</taxon>
    </lineage>
</organism>
<dbReference type="EC" id="1.1.1.267" evidence="1"/>
<dbReference type="EMBL" id="CR378672">
    <property type="protein sequence ID" value="CAG21296.1"/>
    <property type="molecule type" value="Genomic_DNA"/>
</dbReference>
<dbReference type="RefSeq" id="WP_011219563.1">
    <property type="nucleotide sequence ID" value="NC_006370.1"/>
</dbReference>
<dbReference type="SMR" id="Q6LN30"/>
<dbReference type="STRING" id="298386.PBPRA2962"/>
<dbReference type="KEGG" id="ppr:PBPRA2962"/>
<dbReference type="eggNOG" id="COG0743">
    <property type="taxonomic scope" value="Bacteria"/>
</dbReference>
<dbReference type="HOGENOM" id="CLU_035714_4_0_6"/>
<dbReference type="UniPathway" id="UPA00056">
    <property type="reaction ID" value="UER00092"/>
</dbReference>
<dbReference type="Proteomes" id="UP000000593">
    <property type="component" value="Chromosome 1"/>
</dbReference>
<dbReference type="GO" id="GO:0030604">
    <property type="term" value="F:1-deoxy-D-xylulose-5-phosphate reductoisomerase activity"/>
    <property type="evidence" value="ECO:0007669"/>
    <property type="project" value="UniProtKB-UniRule"/>
</dbReference>
<dbReference type="GO" id="GO:0030145">
    <property type="term" value="F:manganese ion binding"/>
    <property type="evidence" value="ECO:0007669"/>
    <property type="project" value="TreeGrafter"/>
</dbReference>
<dbReference type="GO" id="GO:0070402">
    <property type="term" value="F:NADPH binding"/>
    <property type="evidence" value="ECO:0007669"/>
    <property type="project" value="InterPro"/>
</dbReference>
<dbReference type="GO" id="GO:0051484">
    <property type="term" value="P:isopentenyl diphosphate biosynthetic process, methylerythritol 4-phosphate pathway involved in terpenoid biosynthetic process"/>
    <property type="evidence" value="ECO:0007669"/>
    <property type="project" value="TreeGrafter"/>
</dbReference>
<dbReference type="FunFam" id="1.10.1740.10:FF:000004">
    <property type="entry name" value="1-deoxy-D-xylulose 5-phosphate reductoisomerase"/>
    <property type="match status" value="1"/>
</dbReference>
<dbReference type="FunFam" id="3.40.50.720:FF:000045">
    <property type="entry name" value="1-deoxy-D-xylulose 5-phosphate reductoisomerase"/>
    <property type="match status" value="1"/>
</dbReference>
<dbReference type="Gene3D" id="1.10.1740.10">
    <property type="match status" value="1"/>
</dbReference>
<dbReference type="Gene3D" id="3.40.50.720">
    <property type="entry name" value="NAD(P)-binding Rossmann-like Domain"/>
    <property type="match status" value="1"/>
</dbReference>
<dbReference type="HAMAP" id="MF_00183">
    <property type="entry name" value="DXP_reductoisom"/>
    <property type="match status" value="1"/>
</dbReference>
<dbReference type="InterPro" id="IPR003821">
    <property type="entry name" value="DXP_reductoisomerase"/>
</dbReference>
<dbReference type="InterPro" id="IPR013644">
    <property type="entry name" value="DXP_reductoisomerase_C"/>
</dbReference>
<dbReference type="InterPro" id="IPR013512">
    <property type="entry name" value="DXP_reductoisomerase_N"/>
</dbReference>
<dbReference type="InterPro" id="IPR026877">
    <property type="entry name" value="DXPR_C"/>
</dbReference>
<dbReference type="InterPro" id="IPR036169">
    <property type="entry name" value="DXPR_C_sf"/>
</dbReference>
<dbReference type="InterPro" id="IPR036291">
    <property type="entry name" value="NAD(P)-bd_dom_sf"/>
</dbReference>
<dbReference type="NCBIfam" id="TIGR00243">
    <property type="entry name" value="Dxr"/>
    <property type="match status" value="1"/>
</dbReference>
<dbReference type="NCBIfam" id="NF003938">
    <property type="entry name" value="PRK05447.1-1"/>
    <property type="match status" value="1"/>
</dbReference>
<dbReference type="NCBIfam" id="NF009114">
    <property type="entry name" value="PRK12464.1"/>
    <property type="match status" value="1"/>
</dbReference>
<dbReference type="PANTHER" id="PTHR30525">
    <property type="entry name" value="1-DEOXY-D-XYLULOSE 5-PHOSPHATE REDUCTOISOMERASE"/>
    <property type="match status" value="1"/>
</dbReference>
<dbReference type="PANTHER" id="PTHR30525:SF0">
    <property type="entry name" value="1-DEOXY-D-XYLULOSE 5-PHOSPHATE REDUCTOISOMERASE, CHLOROPLASTIC"/>
    <property type="match status" value="1"/>
</dbReference>
<dbReference type="Pfam" id="PF08436">
    <property type="entry name" value="DXP_redisom_C"/>
    <property type="match status" value="1"/>
</dbReference>
<dbReference type="Pfam" id="PF02670">
    <property type="entry name" value="DXP_reductoisom"/>
    <property type="match status" value="1"/>
</dbReference>
<dbReference type="Pfam" id="PF13288">
    <property type="entry name" value="DXPR_C"/>
    <property type="match status" value="1"/>
</dbReference>
<dbReference type="PIRSF" id="PIRSF006205">
    <property type="entry name" value="Dxp_reductismrs"/>
    <property type="match status" value="1"/>
</dbReference>
<dbReference type="SUPFAM" id="SSF69055">
    <property type="entry name" value="1-deoxy-D-xylulose-5-phosphate reductoisomerase, C-terminal domain"/>
    <property type="match status" value="1"/>
</dbReference>
<dbReference type="SUPFAM" id="SSF55347">
    <property type="entry name" value="Glyceraldehyde-3-phosphate dehydrogenase-like, C-terminal domain"/>
    <property type="match status" value="1"/>
</dbReference>
<dbReference type="SUPFAM" id="SSF51735">
    <property type="entry name" value="NAD(P)-binding Rossmann-fold domains"/>
    <property type="match status" value="1"/>
</dbReference>
<gene>
    <name evidence="1" type="primary">dxr</name>
    <name type="ordered locus">PBPRA2962</name>
</gene>
<comment type="function">
    <text evidence="1">Catalyzes the NADPH-dependent rearrangement and reduction of 1-deoxy-D-xylulose-5-phosphate (DXP) to 2-C-methyl-D-erythritol 4-phosphate (MEP).</text>
</comment>
<comment type="catalytic activity">
    <reaction evidence="1">
        <text>2-C-methyl-D-erythritol 4-phosphate + NADP(+) = 1-deoxy-D-xylulose 5-phosphate + NADPH + H(+)</text>
        <dbReference type="Rhea" id="RHEA:13717"/>
        <dbReference type="ChEBI" id="CHEBI:15378"/>
        <dbReference type="ChEBI" id="CHEBI:57783"/>
        <dbReference type="ChEBI" id="CHEBI:57792"/>
        <dbReference type="ChEBI" id="CHEBI:58262"/>
        <dbReference type="ChEBI" id="CHEBI:58349"/>
        <dbReference type="EC" id="1.1.1.267"/>
    </reaction>
    <physiologicalReaction direction="right-to-left" evidence="1">
        <dbReference type="Rhea" id="RHEA:13719"/>
    </physiologicalReaction>
</comment>
<comment type="cofactor">
    <cofactor evidence="1">
        <name>Mg(2+)</name>
        <dbReference type="ChEBI" id="CHEBI:18420"/>
    </cofactor>
    <cofactor evidence="1">
        <name>Mn(2+)</name>
        <dbReference type="ChEBI" id="CHEBI:29035"/>
    </cofactor>
</comment>
<comment type="pathway">
    <text evidence="1">Isoprenoid biosynthesis; isopentenyl diphosphate biosynthesis via DXP pathway; isopentenyl diphosphate from 1-deoxy-D-xylulose 5-phosphate: step 1/6.</text>
</comment>
<comment type="similarity">
    <text evidence="1">Belongs to the DXR family.</text>
</comment>
<proteinExistence type="inferred from homology"/>
<name>DXR_PHOPR</name>
<feature type="chain" id="PRO_0000163689" description="1-deoxy-D-xylulose 5-phosphate reductoisomerase">
    <location>
        <begin position="1"/>
        <end position="397"/>
    </location>
</feature>
<feature type="binding site" evidence="1">
    <location>
        <position position="10"/>
    </location>
    <ligand>
        <name>NADPH</name>
        <dbReference type="ChEBI" id="CHEBI:57783"/>
    </ligand>
</feature>
<feature type="binding site" evidence="1">
    <location>
        <position position="11"/>
    </location>
    <ligand>
        <name>NADPH</name>
        <dbReference type="ChEBI" id="CHEBI:57783"/>
    </ligand>
</feature>
<feature type="binding site" evidence="1">
    <location>
        <position position="12"/>
    </location>
    <ligand>
        <name>NADPH</name>
        <dbReference type="ChEBI" id="CHEBI:57783"/>
    </ligand>
</feature>
<feature type="binding site" evidence="1">
    <location>
        <position position="13"/>
    </location>
    <ligand>
        <name>NADPH</name>
        <dbReference type="ChEBI" id="CHEBI:57783"/>
    </ligand>
</feature>
<feature type="binding site" evidence="1">
    <location>
        <position position="36"/>
    </location>
    <ligand>
        <name>NADPH</name>
        <dbReference type="ChEBI" id="CHEBI:57783"/>
    </ligand>
</feature>
<feature type="binding site" evidence="1">
    <location>
        <position position="38"/>
    </location>
    <ligand>
        <name>NADPH</name>
        <dbReference type="ChEBI" id="CHEBI:57783"/>
    </ligand>
</feature>
<feature type="binding site" evidence="1">
    <location>
        <position position="124"/>
    </location>
    <ligand>
        <name>NADPH</name>
        <dbReference type="ChEBI" id="CHEBI:57783"/>
    </ligand>
</feature>
<feature type="binding site" evidence="1">
    <location>
        <position position="125"/>
    </location>
    <ligand>
        <name>1-deoxy-D-xylulose 5-phosphate</name>
        <dbReference type="ChEBI" id="CHEBI:57792"/>
    </ligand>
</feature>
<feature type="binding site" evidence="1">
    <location>
        <position position="126"/>
    </location>
    <ligand>
        <name>NADPH</name>
        <dbReference type="ChEBI" id="CHEBI:57783"/>
    </ligand>
</feature>
<feature type="binding site" evidence="1">
    <location>
        <position position="150"/>
    </location>
    <ligand>
        <name>Mn(2+)</name>
        <dbReference type="ChEBI" id="CHEBI:29035"/>
    </ligand>
</feature>
<feature type="binding site" evidence="1">
    <location>
        <position position="151"/>
    </location>
    <ligand>
        <name>1-deoxy-D-xylulose 5-phosphate</name>
        <dbReference type="ChEBI" id="CHEBI:57792"/>
    </ligand>
</feature>
<feature type="binding site" evidence="1">
    <location>
        <position position="152"/>
    </location>
    <ligand>
        <name>1-deoxy-D-xylulose 5-phosphate</name>
        <dbReference type="ChEBI" id="CHEBI:57792"/>
    </ligand>
</feature>
<feature type="binding site" evidence="1">
    <location>
        <position position="152"/>
    </location>
    <ligand>
        <name>Mn(2+)</name>
        <dbReference type="ChEBI" id="CHEBI:29035"/>
    </ligand>
</feature>
<feature type="binding site" evidence="1">
    <location>
        <position position="186"/>
    </location>
    <ligand>
        <name>1-deoxy-D-xylulose 5-phosphate</name>
        <dbReference type="ChEBI" id="CHEBI:57792"/>
    </ligand>
</feature>
<feature type="binding site" evidence="1">
    <location>
        <position position="209"/>
    </location>
    <ligand>
        <name>1-deoxy-D-xylulose 5-phosphate</name>
        <dbReference type="ChEBI" id="CHEBI:57792"/>
    </ligand>
</feature>
<feature type="binding site" evidence="1">
    <location>
        <position position="215"/>
    </location>
    <ligand>
        <name>NADPH</name>
        <dbReference type="ChEBI" id="CHEBI:57783"/>
    </ligand>
</feature>
<feature type="binding site" evidence="1">
    <location>
        <position position="222"/>
    </location>
    <ligand>
        <name>1-deoxy-D-xylulose 5-phosphate</name>
        <dbReference type="ChEBI" id="CHEBI:57792"/>
    </ligand>
</feature>
<feature type="binding site" evidence="1">
    <location>
        <position position="227"/>
    </location>
    <ligand>
        <name>1-deoxy-D-xylulose 5-phosphate</name>
        <dbReference type="ChEBI" id="CHEBI:57792"/>
    </ligand>
</feature>
<feature type="binding site" evidence="1">
    <location>
        <position position="228"/>
    </location>
    <ligand>
        <name>1-deoxy-D-xylulose 5-phosphate</name>
        <dbReference type="ChEBI" id="CHEBI:57792"/>
    </ligand>
</feature>
<feature type="binding site" evidence="1">
    <location>
        <position position="231"/>
    </location>
    <ligand>
        <name>1-deoxy-D-xylulose 5-phosphate</name>
        <dbReference type="ChEBI" id="CHEBI:57792"/>
    </ligand>
</feature>
<feature type="binding site" evidence="1">
    <location>
        <position position="231"/>
    </location>
    <ligand>
        <name>Mn(2+)</name>
        <dbReference type="ChEBI" id="CHEBI:29035"/>
    </ligand>
</feature>
<keyword id="KW-0414">Isoprene biosynthesis</keyword>
<keyword id="KW-0464">Manganese</keyword>
<keyword id="KW-0479">Metal-binding</keyword>
<keyword id="KW-0521">NADP</keyword>
<keyword id="KW-0560">Oxidoreductase</keyword>
<keyword id="KW-1185">Reference proteome</keyword>
<sequence>MRKLTILGATGSIGSSTLAVAAQNPQLFEVVALAAGTNSQKMLELCRIWKPKYAAMASLQAAKELSVLLEKHEISTQVLAGDAGLCQVAALDEIDTVMAAIVGAAGLLPTMAGVKAGKRILLANKEALVMSGQMFIDACEQYGAELLPVDSEHNAIFQCLPADIQRAMGRCDLEEYGISKILLTGSGGPFRYTDIAELASVTPQMAIAHPNWSMGPKISVDSATMMNKGLEYIEARWLFNASREQLQVIIHPQSVIHSMVQYKDGSVLAQMGLPDMQTPIACAMSYPDRVDAGVAPLDFSKIGEFTFLPPDYSRYPCLKLAIDACYDGQAATTALNAANEIAVAAFLNNDIGFTDIAIINEQILNSANMATLVDLESVIELDMQARVLAHNIIRKVA</sequence>
<accession>Q6LN30</accession>
<reference key="1">
    <citation type="journal article" date="2005" name="Science">
        <title>Life at depth: Photobacterium profundum genome sequence and expression analysis.</title>
        <authorList>
            <person name="Vezzi A."/>
            <person name="Campanaro S."/>
            <person name="D'Angelo M."/>
            <person name="Simonato F."/>
            <person name="Vitulo N."/>
            <person name="Lauro F.M."/>
            <person name="Cestaro A."/>
            <person name="Malacrida G."/>
            <person name="Simionati B."/>
            <person name="Cannata N."/>
            <person name="Romualdi C."/>
            <person name="Bartlett D.H."/>
            <person name="Valle G."/>
        </authorList>
    </citation>
    <scope>NUCLEOTIDE SEQUENCE [LARGE SCALE GENOMIC DNA]</scope>
    <source>
        <strain>ATCC BAA-1253 / SS9</strain>
    </source>
</reference>